<sequence>MFKHVTVLLKETVDGLDIKPDGTYVDCTLGGGGHSSYLLSQLTEGGKLIAFDQDEIAIQNAKEKFSSYGEQFITVKSNFRYLAEKLQEIGITEVDGILFDLGVSSPQLDTPERGFSYHHDAPLDMRMDQDAPLTAYDVVNSWSYEQLVRIFFQYGEEKFSKQIARKIEAYRENKAIETTGELVELIKEGIPAPARRTGGHPAKRVFQAIRIAVNDELKVFEEALESAIEMVKPGGRVSVITFHSLEDRICKTTFKRNSTTPQLPPGLPIIPDEFKPKLKLITRKPILPSDIELEENNRARSAKLRIAEKR</sequence>
<gene>
    <name evidence="1" type="primary">rsmH</name>
    <name type="synonym">mraW</name>
    <name type="ordered locus">BCG9842_B1222</name>
</gene>
<keyword id="KW-0963">Cytoplasm</keyword>
<keyword id="KW-0489">Methyltransferase</keyword>
<keyword id="KW-0698">rRNA processing</keyword>
<keyword id="KW-0949">S-adenosyl-L-methionine</keyword>
<keyword id="KW-0808">Transferase</keyword>
<accession>B7IVF3</accession>
<organism>
    <name type="scientific">Bacillus cereus (strain G9842)</name>
    <dbReference type="NCBI Taxonomy" id="405531"/>
    <lineage>
        <taxon>Bacteria</taxon>
        <taxon>Bacillati</taxon>
        <taxon>Bacillota</taxon>
        <taxon>Bacilli</taxon>
        <taxon>Bacillales</taxon>
        <taxon>Bacillaceae</taxon>
        <taxon>Bacillus</taxon>
        <taxon>Bacillus cereus group</taxon>
    </lineage>
</organism>
<reference key="1">
    <citation type="submission" date="2008-10" db="EMBL/GenBank/DDBJ databases">
        <title>Genome sequence of Bacillus cereus G9842.</title>
        <authorList>
            <person name="Dodson R.J."/>
            <person name="Durkin A.S."/>
            <person name="Rosovitz M.J."/>
            <person name="Rasko D.A."/>
            <person name="Hoffmaster A."/>
            <person name="Ravel J."/>
            <person name="Sutton G."/>
        </authorList>
    </citation>
    <scope>NUCLEOTIDE SEQUENCE [LARGE SCALE GENOMIC DNA]</scope>
    <source>
        <strain>G9842</strain>
    </source>
</reference>
<evidence type="ECO:0000255" key="1">
    <source>
        <dbReference type="HAMAP-Rule" id="MF_01007"/>
    </source>
</evidence>
<comment type="function">
    <text evidence="1">Specifically methylates the N4 position of cytidine in position 1402 (C1402) of 16S rRNA.</text>
</comment>
<comment type="catalytic activity">
    <reaction evidence="1">
        <text>cytidine(1402) in 16S rRNA + S-adenosyl-L-methionine = N(4)-methylcytidine(1402) in 16S rRNA + S-adenosyl-L-homocysteine + H(+)</text>
        <dbReference type="Rhea" id="RHEA:42928"/>
        <dbReference type="Rhea" id="RHEA-COMP:10286"/>
        <dbReference type="Rhea" id="RHEA-COMP:10287"/>
        <dbReference type="ChEBI" id="CHEBI:15378"/>
        <dbReference type="ChEBI" id="CHEBI:57856"/>
        <dbReference type="ChEBI" id="CHEBI:59789"/>
        <dbReference type="ChEBI" id="CHEBI:74506"/>
        <dbReference type="ChEBI" id="CHEBI:82748"/>
        <dbReference type="EC" id="2.1.1.199"/>
    </reaction>
</comment>
<comment type="subcellular location">
    <subcellularLocation>
        <location evidence="1">Cytoplasm</location>
    </subcellularLocation>
</comment>
<comment type="similarity">
    <text evidence="1">Belongs to the methyltransferase superfamily. RsmH family.</text>
</comment>
<dbReference type="EC" id="2.1.1.199" evidence="1"/>
<dbReference type="EMBL" id="CP001186">
    <property type="protein sequence ID" value="ACK93196.1"/>
    <property type="molecule type" value="Genomic_DNA"/>
</dbReference>
<dbReference type="RefSeq" id="WP_000472508.1">
    <property type="nucleotide sequence ID" value="NC_011772.1"/>
</dbReference>
<dbReference type="SMR" id="B7IVF3"/>
<dbReference type="GeneID" id="72450600"/>
<dbReference type="KEGG" id="bcg:BCG9842_B1222"/>
<dbReference type="HOGENOM" id="CLU_038422_2_0_9"/>
<dbReference type="Proteomes" id="UP000006744">
    <property type="component" value="Chromosome"/>
</dbReference>
<dbReference type="GO" id="GO:0005737">
    <property type="term" value="C:cytoplasm"/>
    <property type="evidence" value="ECO:0007669"/>
    <property type="project" value="UniProtKB-SubCell"/>
</dbReference>
<dbReference type="GO" id="GO:0071424">
    <property type="term" value="F:rRNA (cytosine-N4-)-methyltransferase activity"/>
    <property type="evidence" value="ECO:0007669"/>
    <property type="project" value="UniProtKB-UniRule"/>
</dbReference>
<dbReference type="GO" id="GO:0070475">
    <property type="term" value="P:rRNA base methylation"/>
    <property type="evidence" value="ECO:0007669"/>
    <property type="project" value="UniProtKB-UniRule"/>
</dbReference>
<dbReference type="FunFam" id="1.10.150.170:FF:000001">
    <property type="entry name" value="Ribosomal RNA small subunit methyltransferase H"/>
    <property type="match status" value="1"/>
</dbReference>
<dbReference type="Gene3D" id="1.10.150.170">
    <property type="entry name" value="Putative methyltransferase TM0872, insert domain"/>
    <property type="match status" value="1"/>
</dbReference>
<dbReference type="Gene3D" id="3.40.50.150">
    <property type="entry name" value="Vaccinia Virus protein VP39"/>
    <property type="match status" value="1"/>
</dbReference>
<dbReference type="HAMAP" id="MF_01007">
    <property type="entry name" value="16SrRNA_methyltr_H"/>
    <property type="match status" value="1"/>
</dbReference>
<dbReference type="InterPro" id="IPR002903">
    <property type="entry name" value="RsmH"/>
</dbReference>
<dbReference type="InterPro" id="IPR023397">
    <property type="entry name" value="SAM-dep_MeTrfase_MraW_recog"/>
</dbReference>
<dbReference type="InterPro" id="IPR029063">
    <property type="entry name" value="SAM-dependent_MTases_sf"/>
</dbReference>
<dbReference type="NCBIfam" id="TIGR00006">
    <property type="entry name" value="16S rRNA (cytosine(1402)-N(4))-methyltransferase RsmH"/>
    <property type="match status" value="1"/>
</dbReference>
<dbReference type="PANTHER" id="PTHR11265:SF0">
    <property type="entry name" value="12S RRNA N4-METHYLCYTIDINE METHYLTRANSFERASE"/>
    <property type="match status" value="1"/>
</dbReference>
<dbReference type="PANTHER" id="PTHR11265">
    <property type="entry name" value="S-ADENOSYL-METHYLTRANSFERASE MRAW"/>
    <property type="match status" value="1"/>
</dbReference>
<dbReference type="Pfam" id="PF01795">
    <property type="entry name" value="Methyltransf_5"/>
    <property type="match status" value="1"/>
</dbReference>
<dbReference type="PIRSF" id="PIRSF004486">
    <property type="entry name" value="MraW"/>
    <property type="match status" value="1"/>
</dbReference>
<dbReference type="SUPFAM" id="SSF81799">
    <property type="entry name" value="Putative methyltransferase TM0872, insert domain"/>
    <property type="match status" value="1"/>
</dbReference>
<dbReference type="SUPFAM" id="SSF53335">
    <property type="entry name" value="S-adenosyl-L-methionine-dependent methyltransferases"/>
    <property type="match status" value="1"/>
</dbReference>
<proteinExistence type="inferred from homology"/>
<feature type="chain" id="PRO_0000386732" description="Ribosomal RNA small subunit methyltransferase H">
    <location>
        <begin position="1"/>
        <end position="310"/>
    </location>
</feature>
<feature type="binding site" evidence="1">
    <location>
        <begin position="32"/>
        <end position="34"/>
    </location>
    <ligand>
        <name>S-adenosyl-L-methionine</name>
        <dbReference type="ChEBI" id="CHEBI:59789"/>
    </ligand>
</feature>
<feature type="binding site" evidence="1">
    <location>
        <position position="52"/>
    </location>
    <ligand>
        <name>S-adenosyl-L-methionine</name>
        <dbReference type="ChEBI" id="CHEBI:59789"/>
    </ligand>
</feature>
<feature type="binding site" evidence="1">
    <location>
        <position position="79"/>
    </location>
    <ligand>
        <name>S-adenosyl-L-methionine</name>
        <dbReference type="ChEBI" id="CHEBI:59789"/>
    </ligand>
</feature>
<feature type="binding site" evidence="1">
    <location>
        <position position="100"/>
    </location>
    <ligand>
        <name>S-adenosyl-L-methionine</name>
        <dbReference type="ChEBI" id="CHEBI:59789"/>
    </ligand>
</feature>
<feature type="binding site" evidence="1">
    <location>
        <position position="107"/>
    </location>
    <ligand>
        <name>S-adenosyl-L-methionine</name>
        <dbReference type="ChEBI" id="CHEBI:59789"/>
    </ligand>
</feature>
<protein>
    <recommendedName>
        <fullName evidence="1">Ribosomal RNA small subunit methyltransferase H</fullName>
        <ecNumber evidence="1">2.1.1.199</ecNumber>
    </recommendedName>
    <alternativeName>
        <fullName evidence="1">16S rRNA m(4)C1402 methyltransferase</fullName>
    </alternativeName>
    <alternativeName>
        <fullName evidence="1">rRNA (cytosine-N(4)-)-methyltransferase RsmH</fullName>
    </alternativeName>
</protein>
<name>RSMH_BACC2</name>